<evidence type="ECO:0000250" key="1"/>
<evidence type="ECO:0000255" key="2"/>
<evidence type="ECO:0000305" key="3"/>
<proteinExistence type="inferred from homology"/>
<reference key="1">
    <citation type="journal article" date="1987" name="Gene">
        <title>Unusual genetic codes and a novel gene structure for tRNA(AGYSer) in starfish mitochondrial DNA.</title>
        <authorList>
            <person name="Himeno H."/>
            <person name="Masaki H."/>
            <person name="Kawai T."/>
            <person name="Ohta T."/>
            <person name="Kumagai I."/>
            <person name="Miura K."/>
            <person name="Watanabe K."/>
        </authorList>
    </citation>
    <scope>NUCLEOTIDE SEQUENCE [GENOMIC DNA]</scope>
</reference>
<reference key="2">
    <citation type="journal article" date="1995" name="Genetics">
        <title>Nucleotide sequence and gene organization of the starfish Asterina pectinifera mitochondrial genome.</title>
        <authorList>
            <person name="Asakawa S."/>
            <person name="Himeno H."/>
            <person name="Miura K."/>
            <person name="Watanabe K."/>
        </authorList>
    </citation>
    <scope>NUCLEOTIDE SEQUENCE [GENOMIC DNA]</scope>
    <source>
        <tissue>Ovary</tissue>
    </source>
</reference>
<gene>
    <name type="primary">ND3</name>
</gene>
<geneLocation type="mitochondrion"/>
<dbReference type="EC" id="7.1.1.2"/>
<dbReference type="EMBL" id="M17619">
    <property type="protein sequence ID" value="AAA65515.2"/>
    <property type="molecule type" value="Genomic_DNA"/>
</dbReference>
<dbReference type="EMBL" id="D16387">
    <property type="protein sequence ID" value="BAA03873.1"/>
    <property type="molecule type" value="Genomic_DNA"/>
</dbReference>
<dbReference type="PIR" id="S70590">
    <property type="entry name" value="S70590"/>
</dbReference>
<dbReference type="RefSeq" id="NP_008161.1">
    <property type="nucleotide sequence ID" value="NC_001627.1"/>
</dbReference>
<dbReference type="SMR" id="P11991"/>
<dbReference type="GeneID" id="807820"/>
<dbReference type="CTD" id="4537"/>
<dbReference type="GO" id="GO:0031966">
    <property type="term" value="C:mitochondrial membrane"/>
    <property type="evidence" value="ECO:0007669"/>
    <property type="project" value="UniProtKB-SubCell"/>
</dbReference>
<dbReference type="GO" id="GO:0030964">
    <property type="term" value="C:NADH dehydrogenase complex"/>
    <property type="evidence" value="ECO:0007669"/>
    <property type="project" value="TreeGrafter"/>
</dbReference>
<dbReference type="GO" id="GO:0008137">
    <property type="term" value="F:NADH dehydrogenase (ubiquinone) activity"/>
    <property type="evidence" value="ECO:0007669"/>
    <property type="project" value="UniProtKB-EC"/>
</dbReference>
<dbReference type="Gene3D" id="1.20.58.1610">
    <property type="entry name" value="NADH:ubiquinone/plastoquinone oxidoreductase, chain 3"/>
    <property type="match status" value="1"/>
</dbReference>
<dbReference type="InterPro" id="IPR000440">
    <property type="entry name" value="NADH_UbQ/plastoQ_OxRdtase_su3"/>
</dbReference>
<dbReference type="InterPro" id="IPR038430">
    <property type="entry name" value="NDAH_ubi_oxred_su3_sf"/>
</dbReference>
<dbReference type="PANTHER" id="PTHR11058">
    <property type="entry name" value="NADH-UBIQUINONE OXIDOREDUCTASE CHAIN 3"/>
    <property type="match status" value="1"/>
</dbReference>
<dbReference type="PANTHER" id="PTHR11058:SF9">
    <property type="entry name" value="NADH-UBIQUINONE OXIDOREDUCTASE CHAIN 3"/>
    <property type="match status" value="1"/>
</dbReference>
<dbReference type="Pfam" id="PF00507">
    <property type="entry name" value="Oxidored_q4"/>
    <property type="match status" value="1"/>
</dbReference>
<protein>
    <recommendedName>
        <fullName>NADH-ubiquinone oxidoreductase chain 3</fullName>
        <ecNumber>7.1.1.2</ecNumber>
    </recommendedName>
    <alternativeName>
        <fullName>NADH dehydrogenase subunit 3</fullName>
    </alternativeName>
</protein>
<name>NU3M_PATPE</name>
<comment type="function">
    <text evidence="1">Core subunit of the mitochondrial membrane respiratory chain NADH dehydrogenase (Complex I) that is believed to belong to the minimal assembly required for catalysis. Complex I functions in the transfer of electrons from NADH to the respiratory chain. The immediate electron acceptor for the enzyme is believed to be ubiquinone (By similarity).</text>
</comment>
<comment type="catalytic activity">
    <reaction>
        <text>a ubiquinone + NADH + 5 H(+)(in) = a ubiquinol + NAD(+) + 4 H(+)(out)</text>
        <dbReference type="Rhea" id="RHEA:29091"/>
        <dbReference type="Rhea" id="RHEA-COMP:9565"/>
        <dbReference type="Rhea" id="RHEA-COMP:9566"/>
        <dbReference type="ChEBI" id="CHEBI:15378"/>
        <dbReference type="ChEBI" id="CHEBI:16389"/>
        <dbReference type="ChEBI" id="CHEBI:17976"/>
        <dbReference type="ChEBI" id="CHEBI:57540"/>
        <dbReference type="ChEBI" id="CHEBI:57945"/>
        <dbReference type="EC" id="7.1.1.2"/>
    </reaction>
</comment>
<comment type="subcellular location">
    <subcellularLocation>
        <location evidence="1">Mitochondrion membrane</location>
        <topology evidence="1">Multi-pass membrane protein</topology>
    </subcellularLocation>
</comment>
<comment type="similarity">
    <text evidence="3">Belongs to the complex I subunit 3 family.</text>
</comment>
<organism>
    <name type="scientific">Patiria pectinifera</name>
    <name type="common">Starfish</name>
    <name type="synonym">Asterina pectinifera</name>
    <dbReference type="NCBI Taxonomy" id="7594"/>
    <lineage>
        <taxon>Eukaryota</taxon>
        <taxon>Metazoa</taxon>
        <taxon>Echinodermata</taxon>
        <taxon>Eleutherozoa</taxon>
        <taxon>Asterozoa</taxon>
        <taxon>Asteroidea</taxon>
        <taxon>Valvatacea</taxon>
        <taxon>Valvatida</taxon>
        <taxon>Asterinidae</taxon>
        <taxon>Patiria</taxon>
    </lineage>
</organism>
<feature type="chain" id="PRO_0000117711" description="NADH-ubiquinone oxidoreductase chain 3">
    <location>
        <begin position="1"/>
        <end position="116"/>
    </location>
</feature>
<feature type="transmembrane region" description="Helical" evidence="2">
    <location>
        <begin position="10"/>
        <end position="30"/>
    </location>
</feature>
<feature type="transmembrane region" description="Helical" evidence="2">
    <location>
        <begin position="64"/>
        <end position="84"/>
    </location>
</feature>
<feature type="transmembrane region" description="Helical" evidence="2">
    <location>
        <begin position="88"/>
        <end position="108"/>
    </location>
</feature>
<accession>P11991</accession>
<sequence>MIYTNNIFNFLTLFVSILIFLITTLITFAAHFLPSRNTDSEKSSPYECGFDPLNSARVPFSFRFFLVAILFLLFDLEIALLFPLPFSVFFHPIHTPLILTVGLIFEWVQGGLDWAE</sequence>
<keyword id="KW-0249">Electron transport</keyword>
<keyword id="KW-0472">Membrane</keyword>
<keyword id="KW-0496">Mitochondrion</keyword>
<keyword id="KW-0520">NAD</keyword>
<keyword id="KW-0679">Respiratory chain</keyword>
<keyword id="KW-1278">Translocase</keyword>
<keyword id="KW-0812">Transmembrane</keyword>
<keyword id="KW-1133">Transmembrane helix</keyword>
<keyword id="KW-0813">Transport</keyword>
<keyword id="KW-0830">Ubiquinone</keyword>